<accession>Q24X61</accession>
<evidence type="ECO:0000255" key="1">
    <source>
        <dbReference type="HAMAP-Rule" id="MF_00096"/>
    </source>
</evidence>
<organism>
    <name type="scientific">Desulfitobacterium hafniense (strain Y51)</name>
    <dbReference type="NCBI Taxonomy" id="138119"/>
    <lineage>
        <taxon>Bacteria</taxon>
        <taxon>Bacillati</taxon>
        <taxon>Bacillota</taxon>
        <taxon>Clostridia</taxon>
        <taxon>Eubacteriales</taxon>
        <taxon>Desulfitobacteriaceae</taxon>
        <taxon>Desulfitobacterium</taxon>
    </lineage>
</organism>
<feature type="chain" id="PRO_0000335147" description="DNA mismatch repair protein MutS">
    <location>
        <begin position="1"/>
        <end position="862"/>
    </location>
</feature>
<feature type="binding site" evidence="1">
    <location>
        <begin position="613"/>
        <end position="620"/>
    </location>
    <ligand>
        <name>ATP</name>
        <dbReference type="ChEBI" id="CHEBI:30616"/>
    </ligand>
</feature>
<sequence>MPRQSISKESPTMTTPMMQQYKSIKSQAPDAILFFRLGDFYEMFGEDARTAAPILEIALTGRDSGGGERIPMCGVPHHAVDGYLLKLVSAGYKVALCEQVEDPQAAKGIVKREIIRIISPGTLTDSLVEQANNFLAAVYHEQDWGLAFVDVSTGEFTVFQTESLDILTTELSRIRPSELLLPAELLKAKHWRPYYLTQREKKTYQHTLLEERFTEQRELFQEFPTAMKAANGLWQYILETSPGIDPSHILKVNAYRPEHWMLLDPWTRRNLELTESIRGQGKKGTLLSVLDFTKTAFGGRLLRRWIEQPLLLKGEIEKRLDYVEALVEDSFLRGDLIQLFGKVYDLERLMGKVSYGTANARDLLSLAQTLGVLPQLRALLAEGKSEPLQAFIPALEGLDPLAATLEQAINPEAPISLKDGNLLKAGYSVEIDELRSISSGGKAWVAKLESMEKDRTGIRSLKVGYNKVFGYYIEVTHANSHLIPAEYIRKQTLANAERFITPELKEYEQKILGAEEKVTQLEYQLFLELRETVRGQAAKILEAAHALAEIDVYTSLAEAAVRHHYSRPVMKGEGGLTIIEGRHPVVESMLQDTSFVPNDTILTEDKHLALITGPNMAGKSTYMRQVALIVLMAQIGSFVPAQQATIPIADHIFTRVGASDDLASGQSTFMVEMYEVAHILRHVTPQSLIILDEVGRGTATYDGLSIAWAVAEYLAGQENKPKTLFATHYHELTDLEETHSGIFNLHVGVREHGEEIVFLHKIIPGRADRSYGIQVAKLAGLPANLLHRAKIILHELESSAKESRQEHLFNKEKATQLSLFEVQPLDPLLQEVSELSVEDLTPRQALDYLFDLKERIKAADSL</sequence>
<dbReference type="EMBL" id="AP008230">
    <property type="protein sequence ID" value="BAE83381.1"/>
    <property type="molecule type" value="Genomic_DNA"/>
</dbReference>
<dbReference type="SMR" id="Q24X61"/>
<dbReference type="STRING" id="138119.DSY1592"/>
<dbReference type="KEGG" id="dsy:DSY1592"/>
<dbReference type="eggNOG" id="COG0249">
    <property type="taxonomic scope" value="Bacteria"/>
</dbReference>
<dbReference type="HOGENOM" id="CLU_002472_3_1_9"/>
<dbReference type="Proteomes" id="UP000001946">
    <property type="component" value="Chromosome"/>
</dbReference>
<dbReference type="GO" id="GO:0005829">
    <property type="term" value="C:cytosol"/>
    <property type="evidence" value="ECO:0007669"/>
    <property type="project" value="TreeGrafter"/>
</dbReference>
<dbReference type="GO" id="GO:0005524">
    <property type="term" value="F:ATP binding"/>
    <property type="evidence" value="ECO:0007669"/>
    <property type="project" value="UniProtKB-UniRule"/>
</dbReference>
<dbReference type="GO" id="GO:0140664">
    <property type="term" value="F:ATP-dependent DNA damage sensor activity"/>
    <property type="evidence" value="ECO:0007669"/>
    <property type="project" value="InterPro"/>
</dbReference>
<dbReference type="GO" id="GO:0003684">
    <property type="term" value="F:damaged DNA binding"/>
    <property type="evidence" value="ECO:0007669"/>
    <property type="project" value="UniProtKB-UniRule"/>
</dbReference>
<dbReference type="GO" id="GO:0030983">
    <property type="term" value="F:mismatched DNA binding"/>
    <property type="evidence" value="ECO:0007669"/>
    <property type="project" value="InterPro"/>
</dbReference>
<dbReference type="GO" id="GO:0006298">
    <property type="term" value="P:mismatch repair"/>
    <property type="evidence" value="ECO:0007669"/>
    <property type="project" value="UniProtKB-UniRule"/>
</dbReference>
<dbReference type="CDD" id="cd03284">
    <property type="entry name" value="ABC_MutS1"/>
    <property type="match status" value="1"/>
</dbReference>
<dbReference type="FunFam" id="1.10.1420.10:FF:000001">
    <property type="entry name" value="DNA mismatch repair protein MutS"/>
    <property type="match status" value="1"/>
</dbReference>
<dbReference type="FunFam" id="3.40.1170.10:FF:000001">
    <property type="entry name" value="DNA mismatch repair protein MutS"/>
    <property type="match status" value="1"/>
</dbReference>
<dbReference type="FunFam" id="3.40.50.300:FF:000870">
    <property type="entry name" value="MutS protein homolog 4"/>
    <property type="match status" value="1"/>
</dbReference>
<dbReference type="Gene3D" id="1.10.1420.10">
    <property type="match status" value="2"/>
</dbReference>
<dbReference type="Gene3D" id="3.40.1170.10">
    <property type="entry name" value="DNA repair protein MutS, domain I"/>
    <property type="match status" value="1"/>
</dbReference>
<dbReference type="Gene3D" id="3.30.420.110">
    <property type="entry name" value="MutS, connector domain"/>
    <property type="match status" value="1"/>
</dbReference>
<dbReference type="Gene3D" id="3.40.50.300">
    <property type="entry name" value="P-loop containing nucleotide triphosphate hydrolases"/>
    <property type="match status" value="1"/>
</dbReference>
<dbReference type="HAMAP" id="MF_00096">
    <property type="entry name" value="MutS"/>
    <property type="match status" value="1"/>
</dbReference>
<dbReference type="InterPro" id="IPR005748">
    <property type="entry name" value="DNA_mismatch_repair_MutS"/>
</dbReference>
<dbReference type="InterPro" id="IPR007695">
    <property type="entry name" value="DNA_mismatch_repair_MutS-lik_N"/>
</dbReference>
<dbReference type="InterPro" id="IPR017261">
    <property type="entry name" value="DNA_mismatch_repair_MutS/MSH"/>
</dbReference>
<dbReference type="InterPro" id="IPR000432">
    <property type="entry name" value="DNA_mismatch_repair_MutS_C"/>
</dbReference>
<dbReference type="InterPro" id="IPR007861">
    <property type="entry name" value="DNA_mismatch_repair_MutS_clamp"/>
</dbReference>
<dbReference type="InterPro" id="IPR007696">
    <property type="entry name" value="DNA_mismatch_repair_MutS_core"/>
</dbReference>
<dbReference type="InterPro" id="IPR016151">
    <property type="entry name" value="DNA_mismatch_repair_MutS_N"/>
</dbReference>
<dbReference type="InterPro" id="IPR036187">
    <property type="entry name" value="DNA_mismatch_repair_MutS_sf"/>
</dbReference>
<dbReference type="InterPro" id="IPR007860">
    <property type="entry name" value="DNA_mmatch_repair_MutS_con_dom"/>
</dbReference>
<dbReference type="InterPro" id="IPR045076">
    <property type="entry name" value="MutS"/>
</dbReference>
<dbReference type="InterPro" id="IPR036678">
    <property type="entry name" value="MutS_con_dom_sf"/>
</dbReference>
<dbReference type="InterPro" id="IPR027417">
    <property type="entry name" value="P-loop_NTPase"/>
</dbReference>
<dbReference type="NCBIfam" id="TIGR01070">
    <property type="entry name" value="mutS1"/>
    <property type="match status" value="1"/>
</dbReference>
<dbReference type="NCBIfam" id="NF003810">
    <property type="entry name" value="PRK05399.1"/>
    <property type="match status" value="1"/>
</dbReference>
<dbReference type="PANTHER" id="PTHR11361:SF34">
    <property type="entry name" value="DNA MISMATCH REPAIR PROTEIN MSH1, MITOCHONDRIAL"/>
    <property type="match status" value="1"/>
</dbReference>
<dbReference type="PANTHER" id="PTHR11361">
    <property type="entry name" value="DNA MISMATCH REPAIR PROTEIN MUTS FAMILY MEMBER"/>
    <property type="match status" value="1"/>
</dbReference>
<dbReference type="Pfam" id="PF01624">
    <property type="entry name" value="MutS_I"/>
    <property type="match status" value="1"/>
</dbReference>
<dbReference type="Pfam" id="PF05188">
    <property type="entry name" value="MutS_II"/>
    <property type="match status" value="1"/>
</dbReference>
<dbReference type="Pfam" id="PF05192">
    <property type="entry name" value="MutS_III"/>
    <property type="match status" value="1"/>
</dbReference>
<dbReference type="Pfam" id="PF05190">
    <property type="entry name" value="MutS_IV"/>
    <property type="match status" value="1"/>
</dbReference>
<dbReference type="Pfam" id="PF00488">
    <property type="entry name" value="MutS_V"/>
    <property type="match status" value="1"/>
</dbReference>
<dbReference type="PIRSF" id="PIRSF037677">
    <property type="entry name" value="DNA_mis_repair_Msh6"/>
    <property type="match status" value="1"/>
</dbReference>
<dbReference type="SMART" id="SM00534">
    <property type="entry name" value="MUTSac"/>
    <property type="match status" value="1"/>
</dbReference>
<dbReference type="SMART" id="SM00533">
    <property type="entry name" value="MUTSd"/>
    <property type="match status" value="1"/>
</dbReference>
<dbReference type="SUPFAM" id="SSF55271">
    <property type="entry name" value="DNA repair protein MutS, domain I"/>
    <property type="match status" value="1"/>
</dbReference>
<dbReference type="SUPFAM" id="SSF53150">
    <property type="entry name" value="DNA repair protein MutS, domain II"/>
    <property type="match status" value="1"/>
</dbReference>
<dbReference type="SUPFAM" id="SSF48334">
    <property type="entry name" value="DNA repair protein MutS, domain III"/>
    <property type="match status" value="1"/>
</dbReference>
<dbReference type="SUPFAM" id="SSF52540">
    <property type="entry name" value="P-loop containing nucleoside triphosphate hydrolases"/>
    <property type="match status" value="1"/>
</dbReference>
<dbReference type="PROSITE" id="PS00486">
    <property type="entry name" value="DNA_MISMATCH_REPAIR_2"/>
    <property type="match status" value="1"/>
</dbReference>
<proteinExistence type="inferred from homology"/>
<keyword id="KW-0067">ATP-binding</keyword>
<keyword id="KW-0227">DNA damage</keyword>
<keyword id="KW-0234">DNA repair</keyword>
<keyword id="KW-0238">DNA-binding</keyword>
<keyword id="KW-0547">Nucleotide-binding</keyword>
<keyword id="KW-1185">Reference proteome</keyword>
<name>MUTS_DESHY</name>
<protein>
    <recommendedName>
        <fullName evidence="1">DNA mismatch repair protein MutS</fullName>
    </recommendedName>
</protein>
<gene>
    <name evidence="1" type="primary">mutS</name>
    <name type="ordered locus">DSY1592</name>
</gene>
<reference key="1">
    <citation type="journal article" date="2006" name="J. Bacteriol.">
        <title>Complete genome sequence of the dehalorespiring bacterium Desulfitobacterium hafniense Y51 and comparison with Dehalococcoides ethenogenes 195.</title>
        <authorList>
            <person name="Nonaka H."/>
            <person name="Keresztes G."/>
            <person name="Shinoda Y."/>
            <person name="Ikenaga Y."/>
            <person name="Abe M."/>
            <person name="Naito K."/>
            <person name="Inatomi K."/>
            <person name="Furukawa K."/>
            <person name="Inui M."/>
            <person name="Yukawa H."/>
        </authorList>
    </citation>
    <scope>NUCLEOTIDE SEQUENCE [LARGE SCALE GENOMIC DNA]</scope>
    <source>
        <strain>Y51</strain>
    </source>
</reference>
<comment type="function">
    <text evidence="1">This protein is involved in the repair of mismatches in DNA. It is possible that it carries out the mismatch recognition step. This protein has a weak ATPase activity.</text>
</comment>
<comment type="similarity">
    <text evidence="1">Belongs to the DNA mismatch repair MutS family.</text>
</comment>